<name>SYE_CUPNH</name>
<gene>
    <name evidence="1" type="primary">gltX</name>
    <name type="ordered locus">H16_A2403</name>
</gene>
<evidence type="ECO:0000255" key="1">
    <source>
        <dbReference type="HAMAP-Rule" id="MF_00022"/>
    </source>
</evidence>
<comment type="function">
    <text evidence="1">Catalyzes the attachment of glutamate to tRNA(Glu) in a two-step reaction: glutamate is first activated by ATP to form Glu-AMP and then transferred to the acceptor end of tRNA(Glu).</text>
</comment>
<comment type="catalytic activity">
    <reaction evidence="1">
        <text>tRNA(Glu) + L-glutamate + ATP = L-glutamyl-tRNA(Glu) + AMP + diphosphate</text>
        <dbReference type="Rhea" id="RHEA:23540"/>
        <dbReference type="Rhea" id="RHEA-COMP:9663"/>
        <dbReference type="Rhea" id="RHEA-COMP:9680"/>
        <dbReference type="ChEBI" id="CHEBI:29985"/>
        <dbReference type="ChEBI" id="CHEBI:30616"/>
        <dbReference type="ChEBI" id="CHEBI:33019"/>
        <dbReference type="ChEBI" id="CHEBI:78442"/>
        <dbReference type="ChEBI" id="CHEBI:78520"/>
        <dbReference type="ChEBI" id="CHEBI:456215"/>
        <dbReference type="EC" id="6.1.1.17"/>
    </reaction>
</comment>
<comment type="subunit">
    <text evidence="1">Monomer.</text>
</comment>
<comment type="subcellular location">
    <subcellularLocation>
        <location evidence="1">Cytoplasm</location>
    </subcellularLocation>
</comment>
<comment type="similarity">
    <text evidence="1">Belongs to the class-I aminoacyl-tRNA synthetase family. Glutamate--tRNA ligase type 1 subfamily.</text>
</comment>
<keyword id="KW-0030">Aminoacyl-tRNA synthetase</keyword>
<keyword id="KW-0067">ATP-binding</keyword>
<keyword id="KW-0963">Cytoplasm</keyword>
<keyword id="KW-0436">Ligase</keyword>
<keyword id="KW-0547">Nucleotide-binding</keyword>
<keyword id="KW-0648">Protein biosynthesis</keyword>
<keyword id="KW-1185">Reference proteome</keyword>
<dbReference type="EC" id="6.1.1.17" evidence="1"/>
<dbReference type="EMBL" id="AM260479">
    <property type="protein sequence ID" value="CAJ93495.1"/>
    <property type="molecule type" value="Genomic_DNA"/>
</dbReference>
<dbReference type="RefSeq" id="WP_011615640.1">
    <property type="nucleotide sequence ID" value="NC_008313.1"/>
</dbReference>
<dbReference type="SMR" id="Q0K926"/>
<dbReference type="STRING" id="381666.H16_A2403"/>
<dbReference type="KEGG" id="reh:H16_A2403"/>
<dbReference type="PATRIC" id="fig|381666.6.peg.2812"/>
<dbReference type="eggNOG" id="COG0008">
    <property type="taxonomic scope" value="Bacteria"/>
</dbReference>
<dbReference type="HOGENOM" id="CLU_015768_6_1_4"/>
<dbReference type="OrthoDB" id="9807503at2"/>
<dbReference type="Proteomes" id="UP000008210">
    <property type="component" value="Chromosome 1"/>
</dbReference>
<dbReference type="GO" id="GO:0005829">
    <property type="term" value="C:cytosol"/>
    <property type="evidence" value="ECO:0007669"/>
    <property type="project" value="TreeGrafter"/>
</dbReference>
<dbReference type="GO" id="GO:0005524">
    <property type="term" value="F:ATP binding"/>
    <property type="evidence" value="ECO:0007669"/>
    <property type="project" value="UniProtKB-UniRule"/>
</dbReference>
<dbReference type="GO" id="GO:0004818">
    <property type="term" value="F:glutamate-tRNA ligase activity"/>
    <property type="evidence" value="ECO:0007669"/>
    <property type="project" value="UniProtKB-UniRule"/>
</dbReference>
<dbReference type="GO" id="GO:0000049">
    <property type="term" value="F:tRNA binding"/>
    <property type="evidence" value="ECO:0007669"/>
    <property type="project" value="InterPro"/>
</dbReference>
<dbReference type="GO" id="GO:0008270">
    <property type="term" value="F:zinc ion binding"/>
    <property type="evidence" value="ECO:0007669"/>
    <property type="project" value="InterPro"/>
</dbReference>
<dbReference type="GO" id="GO:0006424">
    <property type="term" value="P:glutamyl-tRNA aminoacylation"/>
    <property type="evidence" value="ECO:0007669"/>
    <property type="project" value="UniProtKB-UniRule"/>
</dbReference>
<dbReference type="CDD" id="cd00808">
    <property type="entry name" value="GluRS_core"/>
    <property type="match status" value="1"/>
</dbReference>
<dbReference type="FunFam" id="3.40.50.620:FF:000007">
    <property type="entry name" value="Glutamate--tRNA ligase"/>
    <property type="match status" value="1"/>
</dbReference>
<dbReference type="Gene3D" id="1.10.10.350">
    <property type="match status" value="1"/>
</dbReference>
<dbReference type="Gene3D" id="3.40.50.620">
    <property type="entry name" value="HUPs"/>
    <property type="match status" value="1"/>
</dbReference>
<dbReference type="HAMAP" id="MF_00022">
    <property type="entry name" value="Glu_tRNA_synth_type1"/>
    <property type="match status" value="1"/>
</dbReference>
<dbReference type="InterPro" id="IPR045462">
    <property type="entry name" value="aa-tRNA-synth_I_cd-bd"/>
</dbReference>
<dbReference type="InterPro" id="IPR020751">
    <property type="entry name" value="aa-tRNA-synth_I_codon-bd_sub2"/>
</dbReference>
<dbReference type="InterPro" id="IPR001412">
    <property type="entry name" value="aa-tRNA-synth_I_CS"/>
</dbReference>
<dbReference type="InterPro" id="IPR008925">
    <property type="entry name" value="aa_tRNA-synth_I_cd-bd_sf"/>
</dbReference>
<dbReference type="InterPro" id="IPR004527">
    <property type="entry name" value="Glu-tRNA-ligase_bac/mito"/>
</dbReference>
<dbReference type="InterPro" id="IPR000924">
    <property type="entry name" value="Glu/Gln-tRNA-synth"/>
</dbReference>
<dbReference type="InterPro" id="IPR020058">
    <property type="entry name" value="Glu/Gln-tRNA-synth_Ib_cat-dom"/>
</dbReference>
<dbReference type="InterPro" id="IPR049940">
    <property type="entry name" value="GluQ/Sye"/>
</dbReference>
<dbReference type="InterPro" id="IPR033910">
    <property type="entry name" value="GluRS_core"/>
</dbReference>
<dbReference type="InterPro" id="IPR014729">
    <property type="entry name" value="Rossmann-like_a/b/a_fold"/>
</dbReference>
<dbReference type="NCBIfam" id="TIGR00464">
    <property type="entry name" value="gltX_bact"/>
    <property type="match status" value="1"/>
</dbReference>
<dbReference type="PANTHER" id="PTHR43311">
    <property type="entry name" value="GLUTAMATE--TRNA LIGASE"/>
    <property type="match status" value="1"/>
</dbReference>
<dbReference type="PANTHER" id="PTHR43311:SF2">
    <property type="entry name" value="GLUTAMATE--TRNA LIGASE, MITOCHONDRIAL-RELATED"/>
    <property type="match status" value="1"/>
</dbReference>
<dbReference type="Pfam" id="PF19269">
    <property type="entry name" value="Anticodon_2"/>
    <property type="match status" value="1"/>
</dbReference>
<dbReference type="Pfam" id="PF00749">
    <property type="entry name" value="tRNA-synt_1c"/>
    <property type="match status" value="1"/>
</dbReference>
<dbReference type="PRINTS" id="PR00987">
    <property type="entry name" value="TRNASYNTHGLU"/>
</dbReference>
<dbReference type="SUPFAM" id="SSF48163">
    <property type="entry name" value="An anticodon-binding domain of class I aminoacyl-tRNA synthetases"/>
    <property type="match status" value="1"/>
</dbReference>
<dbReference type="SUPFAM" id="SSF52374">
    <property type="entry name" value="Nucleotidylyl transferase"/>
    <property type="match status" value="1"/>
</dbReference>
<dbReference type="PROSITE" id="PS00178">
    <property type="entry name" value="AA_TRNA_LIGASE_I"/>
    <property type="match status" value="1"/>
</dbReference>
<reference key="1">
    <citation type="journal article" date="2006" name="Nat. Biotechnol.">
        <title>Genome sequence of the bioplastic-producing 'Knallgas' bacterium Ralstonia eutropha H16.</title>
        <authorList>
            <person name="Pohlmann A."/>
            <person name="Fricke W.F."/>
            <person name="Reinecke F."/>
            <person name="Kusian B."/>
            <person name="Liesegang H."/>
            <person name="Cramm R."/>
            <person name="Eitinger T."/>
            <person name="Ewering C."/>
            <person name="Poetter M."/>
            <person name="Schwartz E."/>
            <person name="Strittmatter A."/>
            <person name="Voss I."/>
            <person name="Gottschalk G."/>
            <person name="Steinbuechel A."/>
            <person name="Friedrich B."/>
            <person name="Bowien B."/>
        </authorList>
    </citation>
    <scope>NUCLEOTIDE SEQUENCE [LARGE SCALE GENOMIC DNA]</scope>
    <source>
        <strain>ATCC 17699 / DSM 428 / KCTC 22496 / NCIMB 10442 / H16 / Stanier 337</strain>
    </source>
</reference>
<organism>
    <name type="scientific">Cupriavidus necator (strain ATCC 17699 / DSM 428 / KCTC 22496 / NCIMB 10442 / H16 / Stanier 337)</name>
    <name type="common">Ralstonia eutropha</name>
    <dbReference type="NCBI Taxonomy" id="381666"/>
    <lineage>
        <taxon>Bacteria</taxon>
        <taxon>Pseudomonadati</taxon>
        <taxon>Pseudomonadota</taxon>
        <taxon>Betaproteobacteria</taxon>
        <taxon>Burkholderiales</taxon>
        <taxon>Burkholderiaceae</taxon>
        <taxon>Cupriavidus</taxon>
    </lineage>
</organism>
<accession>Q0K926</accession>
<proteinExistence type="inferred from homology"/>
<feature type="chain" id="PRO_1000001945" description="Glutamate--tRNA ligase">
    <location>
        <begin position="1"/>
        <end position="466"/>
    </location>
</feature>
<feature type="short sequence motif" description="'HIGH' region" evidence="1">
    <location>
        <begin position="11"/>
        <end position="21"/>
    </location>
</feature>
<feature type="short sequence motif" description="'KMSKS' region" evidence="1">
    <location>
        <begin position="243"/>
        <end position="247"/>
    </location>
</feature>
<feature type="binding site" evidence="1">
    <location>
        <position position="246"/>
    </location>
    <ligand>
        <name>ATP</name>
        <dbReference type="ChEBI" id="CHEBI:30616"/>
    </ligand>
</feature>
<protein>
    <recommendedName>
        <fullName evidence="1">Glutamate--tRNA ligase</fullName>
        <ecNumber evidence="1">6.1.1.17</ecNumber>
    </recommendedName>
    <alternativeName>
        <fullName evidence="1">Glutamyl-tRNA synthetase</fullName>
        <shortName evidence="1">GluRS</shortName>
    </alternativeName>
</protein>
<sequence length="466" mass="52110">MTQRVRTRFAPSPTGFIHLGNIRSALYPWAFARRMKGDFILRIEDTDVERSSQEAVDVILESMAWLEMDIDEGPFYQMQRMDRYREVVAQMVESGLAYRCYMSTEELDALREAQRERGEKPRYNGFWRPEPGKVLPEPPAGVDPVIRFKNPIGGSVVWDDAVKGRIEISNDELDDLVIARPDGTPTYNFCVVVDDLDMKITHVIRGDDHVNNTPRQINIIRALGGTPPVYAHLPTVLNEQGEKMSKRHGAMAVTGYRDEGYLPEAVLNYLARLGWAHGDAEIFSREQFVEWFDLEHLGKSPAQYNPEKLAWLNNHYIKVGDNQRLATLTQPFIEALGGKVEGADLAGVVALVKDRANTLKEVAQAALLFYRGEPQADAALKAEHLTPEIQPALAALANQLAALPEWKREAISATFKAVLAEFGLKMPKLAMPVRLLVAGQLQTPGIDAVLELFGRDTVLRRLAAAA</sequence>